<proteinExistence type="inferred from homology"/>
<protein>
    <recommendedName>
        <fullName evidence="1">Aspartate carbamoyltransferase regulatory chain</fullName>
    </recommendedName>
</protein>
<keyword id="KW-0479">Metal-binding</keyword>
<keyword id="KW-0665">Pyrimidine biosynthesis</keyword>
<keyword id="KW-0862">Zinc</keyword>
<organism>
    <name type="scientific">Yersinia pseudotuberculosis serotype IB (strain PB1/+)</name>
    <dbReference type="NCBI Taxonomy" id="502801"/>
    <lineage>
        <taxon>Bacteria</taxon>
        <taxon>Pseudomonadati</taxon>
        <taxon>Pseudomonadota</taxon>
        <taxon>Gammaproteobacteria</taxon>
        <taxon>Enterobacterales</taxon>
        <taxon>Yersiniaceae</taxon>
        <taxon>Yersinia</taxon>
    </lineage>
</organism>
<comment type="function">
    <text evidence="1">Involved in allosteric regulation of aspartate carbamoyltransferase.</text>
</comment>
<comment type="cofactor">
    <cofactor evidence="1">
        <name>Zn(2+)</name>
        <dbReference type="ChEBI" id="CHEBI:29105"/>
    </cofactor>
    <text evidence="1">Binds 1 zinc ion per subunit.</text>
</comment>
<comment type="subunit">
    <text evidence="1">Contains catalytic and regulatory chains.</text>
</comment>
<comment type="similarity">
    <text evidence="1">Belongs to the PyrI family.</text>
</comment>
<reference key="1">
    <citation type="submission" date="2008-04" db="EMBL/GenBank/DDBJ databases">
        <title>Complete sequence of Yersinia pseudotuberculosis PB1/+.</title>
        <authorList>
            <person name="Copeland A."/>
            <person name="Lucas S."/>
            <person name="Lapidus A."/>
            <person name="Glavina del Rio T."/>
            <person name="Dalin E."/>
            <person name="Tice H."/>
            <person name="Bruce D."/>
            <person name="Goodwin L."/>
            <person name="Pitluck S."/>
            <person name="Munk A.C."/>
            <person name="Brettin T."/>
            <person name="Detter J.C."/>
            <person name="Han C."/>
            <person name="Tapia R."/>
            <person name="Schmutz J."/>
            <person name="Larimer F."/>
            <person name="Land M."/>
            <person name="Hauser L."/>
            <person name="Challacombe J.F."/>
            <person name="Green L."/>
            <person name="Lindler L.E."/>
            <person name="Nikolich M.P."/>
            <person name="Richardson P."/>
        </authorList>
    </citation>
    <scope>NUCLEOTIDE SEQUENCE [LARGE SCALE GENOMIC DNA]</scope>
    <source>
        <strain>PB1/+</strain>
    </source>
</reference>
<feature type="chain" id="PRO_1000088845" description="Aspartate carbamoyltransferase regulatory chain">
    <location>
        <begin position="1"/>
        <end position="155"/>
    </location>
</feature>
<feature type="binding site" evidence="1">
    <location>
        <position position="110"/>
    </location>
    <ligand>
        <name>Zn(2+)</name>
        <dbReference type="ChEBI" id="CHEBI:29105"/>
    </ligand>
</feature>
<feature type="binding site" evidence="1">
    <location>
        <position position="115"/>
    </location>
    <ligand>
        <name>Zn(2+)</name>
        <dbReference type="ChEBI" id="CHEBI:29105"/>
    </ligand>
</feature>
<feature type="binding site" evidence="1">
    <location>
        <position position="139"/>
    </location>
    <ligand>
        <name>Zn(2+)</name>
        <dbReference type="ChEBI" id="CHEBI:29105"/>
    </ligand>
</feature>
<feature type="binding site" evidence="1">
    <location>
        <position position="142"/>
    </location>
    <ligand>
        <name>Zn(2+)</name>
        <dbReference type="ChEBI" id="CHEBI:29105"/>
    </ligand>
</feature>
<name>PYRI_YERPB</name>
<gene>
    <name evidence="1" type="primary">pyrI</name>
    <name type="ordered locus">YPTS_3718</name>
</gene>
<sequence>MMTQDYKLQVEAIKCGTVIDHIPAQIGFKLLSLFKLTATDQRITIGLNLPSKRSGRKDLIKIENTFLTEQQANQLAMYAPDATVNRIDNYEVVKKLTLSLPERIDAVLTCPNSNCISHNEPVDSSFTVKAQRGEISLKCKYCEKEFDHLAVLHAD</sequence>
<evidence type="ECO:0000255" key="1">
    <source>
        <dbReference type="HAMAP-Rule" id="MF_00002"/>
    </source>
</evidence>
<dbReference type="EMBL" id="CP001048">
    <property type="protein sequence ID" value="ACC90671.1"/>
    <property type="molecule type" value="Genomic_DNA"/>
</dbReference>
<dbReference type="SMR" id="B2K422"/>
<dbReference type="KEGG" id="ypb:YPTS_3718"/>
<dbReference type="GO" id="GO:0009347">
    <property type="term" value="C:aspartate carbamoyltransferase complex"/>
    <property type="evidence" value="ECO:0007669"/>
    <property type="project" value="InterPro"/>
</dbReference>
<dbReference type="GO" id="GO:0046872">
    <property type="term" value="F:metal ion binding"/>
    <property type="evidence" value="ECO:0007669"/>
    <property type="project" value="UniProtKB-KW"/>
</dbReference>
<dbReference type="GO" id="GO:0006207">
    <property type="term" value="P:'de novo' pyrimidine nucleobase biosynthetic process"/>
    <property type="evidence" value="ECO:0007669"/>
    <property type="project" value="InterPro"/>
</dbReference>
<dbReference type="GO" id="GO:0006221">
    <property type="term" value="P:pyrimidine nucleotide biosynthetic process"/>
    <property type="evidence" value="ECO:0007669"/>
    <property type="project" value="UniProtKB-UniRule"/>
</dbReference>
<dbReference type="FunFam" id="3.30.70.140:FF:000001">
    <property type="entry name" value="Aspartate carbamoyltransferase regulatory chain"/>
    <property type="match status" value="1"/>
</dbReference>
<dbReference type="Gene3D" id="2.30.30.20">
    <property type="entry name" value="Aspartate carbamoyltransferase regulatory subunit, C-terminal domain"/>
    <property type="match status" value="1"/>
</dbReference>
<dbReference type="Gene3D" id="3.30.70.140">
    <property type="entry name" value="Aspartate carbamoyltransferase regulatory subunit, N-terminal domain"/>
    <property type="match status" value="1"/>
</dbReference>
<dbReference type="HAMAP" id="MF_00002">
    <property type="entry name" value="Asp_carb_tr_reg"/>
    <property type="match status" value="1"/>
</dbReference>
<dbReference type="InterPro" id="IPR020545">
    <property type="entry name" value="Asp_carbamoyltransf_reg_N"/>
</dbReference>
<dbReference type="InterPro" id="IPR002801">
    <property type="entry name" value="Asp_carbamoylTrfase_reg"/>
</dbReference>
<dbReference type="InterPro" id="IPR020542">
    <property type="entry name" value="Asp_carbamoyltrfase_reg_C"/>
</dbReference>
<dbReference type="InterPro" id="IPR036792">
    <property type="entry name" value="Asp_carbatrfase_reg_C_sf"/>
</dbReference>
<dbReference type="InterPro" id="IPR036793">
    <property type="entry name" value="Asp_carbatrfase_reg_N_sf"/>
</dbReference>
<dbReference type="NCBIfam" id="TIGR00240">
    <property type="entry name" value="ATCase_reg"/>
    <property type="match status" value="1"/>
</dbReference>
<dbReference type="PANTHER" id="PTHR35805">
    <property type="entry name" value="ASPARTATE CARBAMOYLTRANSFERASE REGULATORY CHAIN"/>
    <property type="match status" value="1"/>
</dbReference>
<dbReference type="PANTHER" id="PTHR35805:SF1">
    <property type="entry name" value="ASPARTATE CARBAMOYLTRANSFERASE REGULATORY CHAIN"/>
    <property type="match status" value="1"/>
</dbReference>
<dbReference type="Pfam" id="PF01948">
    <property type="entry name" value="PyrI"/>
    <property type="match status" value="1"/>
</dbReference>
<dbReference type="Pfam" id="PF02748">
    <property type="entry name" value="PyrI_C"/>
    <property type="match status" value="1"/>
</dbReference>
<dbReference type="SUPFAM" id="SSF57825">
    <property type="entry name" value="Aspartate carbamoyltransferase, Regulatory-chain, C-terminal domain"/>
    <property type="match status" value="1"/>
</dbReference>
<dbReference type="SUPFAM" id="SSF54893">
    <property type="entry name" value="Aspartate carbamoyltransferase, Regulatory-chain, N-terminal domain"/>
    <property type="match status" value="1"/>
</dbReference>
<accession>B2K422</accession>